<comment type="function">
    <text evidence="1">One of the primary rRNA binding proteins, it binds directly to 16S rRNA where it nucleates assembly of the head domain of the 30S subunit. Is located at the subunit interface close to the decoding center, probably blocks exit of the E-site tRNA.</text>
</comment>
<comment type="subunit">
    <text evidence="1">Part of the 30S ribosomal subunit. Contacts proteins S9 and S11.</text>
</comment>
<comment type="similarity">
    <text evidence="1">Belongs to the universal ribosomal protein uS7 family.</text>
</comment>
<proteinExistence type="inferred from homology"/>
<gene>
    <name evidence="1" type="primary">rpsG</name>
    <name type="ordered locus">KRH_06120</name>
</gene>
<accession>B2GIL0</accession>
<evidence type="ECO:0000255" key="1">
    <source>
        <dbReference type="HAMAP-Rule" id="MF_00480"/>
    </source>
</evidence>
<evidence type="ECO:0000305" key="2"/>
<sequence>MPRKGPAPKRPLVVDPVYGSPVVTQLINKVLQDGKKSTAERIVYGALEGVRNKTNSDPVATLKKALENVKPALEVRSRRVGGATYQVPVEVKAGRAQALSLRWLVGYSKARRENTMTERLQNEILDASNGLGAAVKRREDTHKMAESNKAFAHYRW</sequence>
<keyword id="KW-1185">Reference proteome</keyword>
<keyword id="KW-0687">Ribonucleoprotein</keyword>
<keyword id="KW-0689">Ribosomal protein</keyword>
<keyword id="KW-0694">RNA-binding</keyword>
<keyword id="KW-0699">rRNA-binding</keyword>
<keyword id="KW-0820">tRNA-binding</keyword>
<dbReference type="EMBL" id="AP009152">
    <property type="protein sequence ID" value="BAG28959.1"/>
    <property type="molecule type" value="Genomic_DNA"/>
</dbReference>
<dbReference type="RefSeq" id="WP_012397685.1">
    <property type="nucleotide sequence ID" value="NZ_VECX01000001.1"/>
</dbReference>
<dbReference type="SMR" id="B2GIL0"/>
<dbReference type="STRING" id="378753.KRH_06120"/>
<dbReference type="GeneID" id="93232740"/>
<dbReference type="KEGG" id="krh:KRH_06120"/>
<dbReference type="eggNOG" id="COG0049">
    <property type="taxonomic scope" value="Bacteria"/>
</dbReference>
<dbReference type="HOGENOM" id="CLU_072226_1_1_11"/>
<dbReference type="OrthoDB" id="9807653at2"/>
<dbReference type="Proteomes" id="UP000008838">
    <property type="component" value="Chromosome"/>
</dbReference>
<dbReference type="GO" id="GO:0015935">
    <property type="term" value="C:small ribosomal subunit"/>
    <property type="evidence" value="ECO:0007669"/>
    <property type="project" value="InterPro"/>
</dbReference>
<dbReference type="GO" id="GO:0019843">
    <property type="term" value="F:rRNA binding"/>
    <property type="evidence" value="ECO:0007669"/>
    <property type="project" value="UniProtKB-UniRule"/>
</dbReference>
<dbReference type="GO" id="GO:0003735">
    <property type="term" value="F:structural constituent of ribosome"/>
    <property type="evidence" value="ECO:0007669"/>
    <property type="project" value="InterPro"/>
</dbReference>
<dbReference type="GO" id="GO:0000049">
    <property type="term" value="F:tRNA binding"/>
    <property type="evidence" value="ECO:0007669"/>
    <property type="project" value="UniProtKB-UniRule"/>
</dbReference>
<dbReference type="GO" id="GO:0006412">
    <property type="term" value="P:translation"/>
    <property type="evidence" value="ECO:0007669"/>
    <property type="project" value="UniProtKB-UniRule"/>
</dbReference>
<dbReference type="CDD" id="cd14869">
    <property type="entry name" value="uS7_Bacteria"/>
    <property type="match status" value="1"/>
</dbReference>
<dbReference type="FunFam" id="1.10.455.10:FF:000001">
    <property type="entry name" value="30S ribosomal protein S7"/>
    <property type="match status" value="1"/>
</dbReference>
<dbReference type="Gene3D" id="1.10.455.10">
    <property type="entry name" value="Ribosomal protein S7 domain"/>
    <property type="match status" value="1"/>
</dbReference>
<dbReference type="HAMAP" id="MF_00480_B">
    <property type="entry name" value="Ribosomal_uS7_B"/>
    <property type="match status" value="1"/>
</dbReference>
<dbReference type="InterPro" id="IPR000235">
    <property type="entry name" value="Ribosomal_uS7"/>
</dbReference>
<dbReference type="InterPro" id="IPR005717">
    <property type="entry name" value="Ribosomal_uS7_bac/org-type"/>
</dbReference>
<dbReference type="InterPro" id="IPR020606">
    <property type="entry name" value="Ribosomal_uS7_CS"/>
</dbReference>
<dbReference type="InterPro" id="IPR023798">
    <property type="entry name" value="Ribosomal_uS7_dom"/>
</dbReference>
<dbReference type="InterPro" id="IPR036823">
    <property type="entry name" value="Ribosomal_uS7_dom_sf"/>
</dbReference>
<dbReference type="NCBIfam" id="TIGR01029">
    <property type="entry name" value="rpsG_bact"/>
    <property type="match status" value="1"/>
</dbReference>
<dbReference type="PANTHER" id="PTHR11205">
    <property type="entry name" value="RIBOSOMAL PROTEIN S7"/>
    <property type="match status" value="1"/>
</dbReference>
<dbReference type="Pfam" id="PF00177">
    <property type="entry name" value="Ribosomal_S7"/>
    <property type="match status" value="1"/>
</dbReference>
<dbReference type="PIRSF" id="PIRSF002122">
    <property type="entry name" value="RPS7p_RPS7a_RPS5e_RPS7o"/>
    <property type="match status" value="1"/>
</dbReference>
<dbReference type="SUPFAM" id="SSF47973">
    <property type="entry name" value="Ribosomal protein S7"/>
    <property type="match status" value="1"/>
</dbReference>
<dbReference type="PROSITE" id="PS00052">
    <property type="entry name" value="RIBOSOMAL_S7"/>
    <property type="match status" value="1"/>
</dbReference>
<reference key="1">
    <citation type="journal article" date="2008" name="J. Bacteriol.">
        <title>Complete genome sequence of the soil actinomycete Kocuria rhizophila.</title>
        <authorList>
            <person name="Takarada H."/>
            <person name="Sekine M."/>
            <person name="Kosugi H."/>
            <person name="Matsuo Y."/>
            <person name="Fujisawa T."/>
            <person name="Omata S."/>
            <person name="Kishi E."/>
            <person name="Shimizu A."/>
            <person name="Tsukatani N."/>
            <person name="Tanikawa S."/>
            <person name="Fujita N."/>
            <person name="Harayama S."/>
        </authorList>
    </citation>
    <scope>NUCLEOTIDE SEQUENCE [LARGE SCALE GENOMIC DNA]</scope>
    <source>
        <strain>ATCC 9341 / DSM 348 / NBRC 103217 / DC2201</strain>
    </source>
</reference>
<organism>
    <name type="scientific">Kocuria rhizophila (strain ATCC 9341 / DSM 348 / NBRC 103217 / DC2201)</name>
    <dbReference type="NCBI Taxonomy" id="378753"/>
    <lineage>
        <taxon>Bacteria</taxon>
        <taxon>Bacillati</taxon>
        <taxon>Actinomycetota</taxon>
        <taxon>Actinomycetes</taxon>
        <taxon>Micrococcales</taxon>
        <taxon>Micrococcaceae</taxon>
        <taxon>Kocuria</taxon>
    </lineage>
</organism>
<name>RS7_KOCRD</name>
<protein>
    <recommendedName>
        <fullName evidence="1">Small ribosomal subunit protein uS7</fullName>
    </recommendedName>
    <alternativeName>
        <fullName evidence="2">30S ribosomal protein S7</fullName>
    </alternativeName>
</protein>
<feature type="chain" id="PRO_1000125958" description="Small ribosomal subunit protein uS7">
    <location>
        <begin position="1"/>
        <end position="156"/>
    </location>
</feature>